<accession>A5U3L8</accession>
<proteinExistence type="inferred from homology"/>
<keyword id="KW-0143">Chaperone</keyword>
<keyword id="KW-0963">Cytoplasm</keyword>
<keyword id="KW-0996">Nickel insertion</keyword>
<keyword id="KW-1185">Reference proteome</keyword>
<evidence type="ECO:0000255" key="1">
    <source>
        <dbReference type="HAMAP-Rule" id="MF_01385"/>
    </source>
</evidence>
<evidence type="ECO:0000256" key="2">
    <source>
        <dbReference type="SAM" id="MobiDB-lite"/>
    </source>
</evidence>
<name>UREF_MYCTA</name>
<reference key="1">
    <citation type="journal article" date="2008" name="PLoS ONE">
        <title>Genetic basis of virulence attenuation revealed by comparative genomic analysis of Mycobacterium tuberculosis strain H37Ra versus H37Rv.</title>
        <authorList>
            <person name="Zheng H."/>
            <person name="Lu L."/>
            <person name="Wang B."/>
            <person name="Pu S."/>
            <person name="Zhang X."/>
            <person name="Zhu G."/>
            <person name="Shi W."/>
            <person name="Zhang L."/>
            <person name="Wang H."/>
            <person name="Wang S."/>
            <person name="Zhao G."/>
            <person name="Zhang Y."/>
        </authorList>
    </citation>
    <scope>NUCLEOTIDE SEQUENCE [LARGE SCALE GENOMIC DNA]</scope>
    <source>
        <strain>ATCC 25177 / H37Ra</strain>
    </source>
</reference>
<organism>
    <name type="scientific">Mycobacterium tuberculosis (strain ATCC 25177 / H37Ra)</name>
    <dbReference type="NCBI Taxonomy" id="419947"/>
    <lineage>
        <taxon>Bacteria</taxon>
        <taxon>Bacillati</taxon>
        <taxon>Actinomycetota</taxon>
        <taxon>Actinomycetes</taxon>
        <taxon>Mycobacteriales</taxon>
        <taxon>Mycobacteriaceae</taxon>
        <taxon>Mycobacterium</taxon>
        <taxon>Mycobacterium tuberculosis complex</taxon>
    </lineage>
</organism>
<gene>
    <name evidence="1" type="primary">ureF</name>
    <name type="ordered locus">MRA_1862</name>
</gene>
<protein>
    <recommendedName>
        <fullName evidence="1">Urease accessory protein UreF</fullName>
    </recommendedName>
</protein>
<dbReference type="EMBL" id="CP000611">
    <property type="protein sequence ID" value="ABQ73618.1"/>
    <property type="molecule type" value="Genomic_DNA"/>
</dbReference>
<dbReference type="RefSeq" id="WP_003899050.1">
    <property type="nucleotide sequence ID" value="NZ_CP016972.1"/>
</dbReference>
<dbReference type="SMR" id="A5U3L8"/>
<dbReference type="KEGG" id="mra:MRA_1862"/>
<dbReference type="eggNOG" id="COG0830">
    <property type="taxonomic scope" value="Bacteria"/>
</dbReference>
<dbReference type="HOGENOM" id="CLU_049215_3_0_11"/>
<dbReference type="Proteomes" id="UP000001988">
    <property type="component" value="Chromosome"/>
</dbReference>
<dbReference type="GO" id="GO:0005737">
    <property type="term" value="C:cytoplasm"/>
    <property type="evidence" value="ECO:0007669"/>
    <property type="project" value="UniProtKB-SubCell"/>
</dbReference>
<dbReference type="GO" id="GO:0016151">
    <property type="term" value="F:nickel cation binding"/>
    <property type="evidence" value="ECO:0007669"/>
    <property type="project" value="UniProtKB-UniRule"/>
</dbReference>
<dbReference type="Gene3D" id="1.10.4190.10">
    <property type="entry name" value="Urease accessory protein UreF"/>
    <property type="match status" value="1"/>
</dbReference>
<dbReference type="HAMAP" id="MF_01385">
    <property type="entry name" value="UreF"/>
    <property type="match status" value="1"/>
</dbReference>
<dbReference type="InterPro" id="IPR002639">
    <property type="entry name" value="UreF"/>
</dbReference>
<dbReference type="InterPro" id="IPR038277">
    <property type="entry name" value="UreF_sf"/>
</dbReference>
<dbReference type="PANTHER" id="PTHR33620">
    <property type="entry name" value="UREASE ACCESSORY PROTEIN F"/>
    <property type="match status" value="1"/>
</dbReference>
<dbReference type="PANTHER" id="PTHR33620:SF1">
    <property type="entry name" value="UREASE ACCESSORY PROTEIN F"/>
    <property type="match status" value="1"/>
</dbReference>
<dbReference type="Pfam" id="PF01730">
    <property type="entry name" value="UreF"/>
    <property type="match status" value="1"/>
</dbReference>
<dbReference type="PIRSF" id="PIRSF009467">
    <property type="entry name" value="Ureas_acces_UreF"/>
    <property type="match status" value="1"/>
</dbReference>
<comment type="function">
    <text evidence="1">Required for maturation of urease via the functional incorporation of the urease nickel metallocenter.</text>
</comment>
<comment type="subunit">
    <text evidence="1">UreD, UreF and UreG form a complex that acts as a GTP-hydrolysis-dependent molecular chaperone, activating the urease apoprotein by helping to assemble the nickel containing metallocenter of UreC. The UreE protein probably delivers the nickel.</text>
</comment>
<comment type="subcellular location">
    <subcellularLocation>
        <location evidence="1">Cytoplasm</location>
    </subcellularLocation>
</comment>
<comment type="similarity">
    <text evidence="1">Belongs to the UreF family.</text>
</comment>
<sequence>MTSLAVLLTLADSRLPTGAHVHSGGIEEAIAAGMVTGLATLEAFLKRRVRTHGLLTASIAAAVHRGELAVDDADRETDARTPAPAARHASRSQGRGLIRLARRVWPDSGWEELGPRPHLAVVAGRVGALSGLAPEHNALHLVYITMTGSAIAAQRLLALDPAEVTVVTFQLSELCEQIAQEATAGLADLSDPLLDTLAQRHDERVRPLFVS</sequence>
<feature type="chain" id="PRO_1000145125" description="Urease accessory protein UreF">
    <location>
        <begin position="1"/>
        <end position="211"/>
    </location>
</feature>
<feature type="region of interest" description="Disordered" evidence="2">
    <location>
        <begin position="71"/>
        <end position="93"/>
    </location>
</feature>